<protein>
    <recommendedName>
        <fullName>Myosin-binding protein C, cardiac-type</fullName>
        <shortName>Cardiac MyBP-C</shortName>
    </recommendedName>
    <alternativeName>
        <fullName>C-protein, cardiac muscle isoform</fullName>
    </alternativeName>
</protein>
<accession>Q90688</accession>
<accession>Q90907</accession>
<feature type="initiator methionine" description="Removed">
    <location>
        <position position="1"/>
    </location>
</feature>
<feature type="chain" id="PRO_0000072696" description="Myosin-binding protein C, cardiac-type">
    <location>
        <begin position="2"/>
        <end position="1272"/>
    </location>
</feature>
<feature type="domain" description="Ig-like C2-type 1">
    <location>
        <begin position="137"/>
        <end position="252"/>
    </location>
</feature>
<feature type="domain" description="Ig-like C2-type 2">
    <location>
        <begin position="359"/>
        <end position="451"/>
    </location>
</feature>
<feature type="domain" description="Ig-like C2-type 3">
    <location>
        <begin position="452"/>
        <end position="542"/>
    </location>
</feature>
<feature type="domain" description="Ig-like C2-type 4">
    <location>
        <begin position="543"/>
        <end position="640"/>
    </location>
</feature>
<feature type="domain" description="Ig-like C2-type 5">
    <location>
        <begin position="644"/>
        <end position="763"/>
    </location>
</feature>
<feature type="domain" description="Fibronectin type-III 1" evidence="1">
    <location>
        <begin position="772"/>
        <end position="868"/>
    </location>
</feature>
<feature type="domain" description="Fibronectin type-III 2" evidence="1">
    <location>
        <begin position="870"/>
        <end position="965"/>
    </location>
</feature>
<feature type="domain" description="Ig-like C2-type 6">
    <location>
        <begin position="969"/>
        <end position="1057"/>
    </location>
</feature>
<feature type="domain" description="Fibronectin type-III 3" evidence="1">
    <location>
        <begin position="1066"/>
        <end position="1161"/>
    </location>
</feature>
<feature type="domain" description="Ig-like C2-type 7">
    <location>
        <begin position="1179"/>
        <end position="1263"/>
    </location>
</feature>
<feature type="region of interest" description="Disordered" evidence="2">
    <location>
        <begin position="95"/>
        <end position="147"/>
    </location>
</feature>
<feature type="compositionally biased region" description="Low complexity" evidence="2">
    <location>
        <begin position="102"/>
        <end position="117"/>
    </location>
</feature>
<feature type="modified residue" description="Phosphoserine; by PKA and PKC" evidence="3">
    <location>
        <position position="265"/>
    </location>
</feature>
<feature type="modified residue" description="Phosphothreonine; by PKA and PKC" evidence="3">
    <location>
        <position position="274"/>
    </location>
</feature>
<feature type="modified residue" description="Phosphoserine; by PKA" evidence="3">
    <location>
        <position position="300"/>
    </location>
</feature>
<feature type="modified residue" description="Phosphoserine; by PKC" evidence="3">
    <location>
        <position position="1169"/>
    </location>
</feature>
<feature type="splice variant" id="VSP_002546" description="In isoform Type II." evidence="4">
    <location>
        <begin position="265"/>
        <end position="279"/>
    </location>
</feature>
<feature type="sequence conflict" description="In Ref. 1; BAA07799." evidence="4" ref="1">
    <location>
        <position position="110"/>
    </location>
</feature>
<feature type="sequence conflict" description="In Ref. 1; BAA07799." evidence="4" ref="1">
    <original>IWQ</original>
    <variation>SGR</variation>
    <location>
        <begin position="681"/>
        <end position="683"/>
    </location>
</feature>
<feature type="sequence conflict" description="In Ref. 1; BAA07799." evidence="4" ref="1">
    <original>L</original>
    <variation>F</variation>
    <location>
        <position position="1244"/>
    </location>
</feature>
<gene>
    <name type="primary">MYBPC3</name>
</gene>
<name>MYPC3_CHICK</name>
<comment type="function">
    <text>Thick filament-associated protein located in the crossbridge region of vertebrate striated muscle A bands. In vitro it binds MHC, F-actin and native thin filaments, and modifies the activity of actin-activated myosin ATPase. It may modulate muscle contraction or may play a more structural role. May be involved in the early phase of myofibrillogenesis.</text>
</comment>
<comment type="alternative products">
    <event type="alternative splicing"/>
    <isoform>
        <id>Q90688-1</id>
        <name>Type I</name>
        <sequence type="displayed"/>
    </isoform>
    <isoform>
        <id>Q90688-2</id>
        <name>Type II</name>
        <sequence type="described" ref="VSP_002546"/>
    </isoform>
</comment>
<comment type="tissue specificity">
    <text>Expressed specifically in cardiac muscle among adult tissues, but is also expressed transiently in the skeletal muscle at early developmental stages. Isoform Type I is found in embryonic skeletal muscle and isoform Type II is found in both embryonic skeletal and cardiac muscle.</text>
</comment>
<comment type="PTM">
    <text evidence="3">Substrate for phosphorylation by PKA and PKC. Reversible phosphorylation appears to modulate contraction.</text>
</comment>
<comment type="similarity">
    <text evidence="4">Belongs to the immunoglobulin superfamily. MyBP family.</text>
</comment>
<evidence type="ECO:0000255" key="1">
    <source>
        <dbReference type="PROSITE-ProRule" id="PRU00316"/>
    </source>
</evidence>
<evidence type="ECO:0000256" key="2">
    <source>
        <dbReference type="SAM" id="MobiDB-lite"/>
    </source>
</evidence>
<evidence type="ECO:0000269" key="3">
    <source>
    </source>
</evidence>
<evidence type="ECO:0000305" key="4"/>
<reference key="1">
    <citation type="journal article" date="1995" name="J. Mol. Cell. Cardiol.">
        <title>Complete primary structure of chicken cardiac C-protein (MyBP-C) and its expression in developing striated muscles.</title>
        <authorList>
            <person name="Yasuda M."/>
            <person name="Koshida S."/>
            <person name="Sato N."/>
            <person name="Obinata T."/>
        </authorList>
    </citation>
    <scope>NUCLEOTIDE SEQUENCE [MRNA]</scope>
    <scope>PROTEIN SEQUENCE OF 772-777</scope>
    <source>
        <tissue>Embryonic heart</tissue>
        <tissue>Embryonic skeletal muscle</tissue>
    </source>
</reference>
<reference key="2">
    <citation type="submission" date="1995-10" db="EMBL/GenBank/DDBJ databases">
        <authorList>
            <person name="Mohamed A.S."/>
            <person name="Dignam J.D."/>
            <person name="Schlender K.K."/>
        </authorList>
    </citation>
    <scope>NUCLEOTIDE SEQUENCE [MRNA]</scope>
</reference>
<reference key="3">
    <citation type="journal article" date="1998" name="Arch. Biochem. Biophys.">
        <title>Cardiac myosin-binding protein C (MyBP-C): identification of protein kinase A and protein kinase C phosphorylation sites.</title>
        <authorList>
            <person name="Mohamed A.S."/>
            <person name="Dignam J.D."/>
            <person name="Schlender K.K."/>
        </authorList>
    </citation>
    <scope>PROTEIN SEQUENCE OF N-TERMINUS</scope>
    <scope>PARTIAL PROTEIN SEQUENCE</scope>
    <scope>PHOSPHORYLATION AT SER-265; THR-274; SER-300 AND SER-1169</scope>
    <source>
        <tissue>Heart</tissue>
    </source>
</reference>
<dbReference type="EMBL" id="D43697">
    <property type="protein sequence ID" value="BAA07799.1"/>
    <property type="molecule type" value="mRNA"/>
</dbReference>
<dbReference type="EMBL" id="U38949">
    <property type="protein sequence ID" value="AAA92617.1"/>
    <property type="molecule type" value="mRNA"/>
</dbReference>
<dbReference type="SMR" id="Q90688"/>
<dbReference type="FunCoup" id="Q90688">
    <property type="interactions" value="3"/>
</dbReference>
<dbReference type="STRING" id="9031.ENSGALP00000053390"/>
<dbReference type="GlyGen" id="Q90688">
    <property type="glycosylation" value="1 site"/>
</dbReference>
<dbReference type="iPTMnet" id="Q90688"/>
<dbReference type="PaxDb" id="9031-ENSGALP00000032013"/>
<dbReference type="VEuPathDB" id="HostDB:geneid_396013"/>
<dbReference type="eggNOG" id="ENOG502QWRQ">
    <property type="taxonomic scope" value="Eukaryota"/>
</dbReference>
<dbReference type="InParanoid" id="Q90688"/>
<dbReference type="OrthoDB" id="6107607at2759"/>
<dbReference type="PhylomeDB" id="Q90688"/>
<dbReference type="PRO" id="PR:Q90688"/>
<dbReference type="Proteomes" id="UP000000539">
    <property type="component" value="Unassembled WGS sequence"/>
</dbReference>
<dbReference type="GO" id="GO:0031430">
    <property type="term" value="C:M band"/>
    <property type="evidence" value="ECO:0000318"/>
    <property type="project" value="GO_Central"/>
</dbReference>
<dbReference type="GO" id="GO:0032982">
    <property type="term" value="C:myosin filament"/>
    <property type="evidence" value="ECO:0007669"/>
    <property type="project" value="UniProtKB-KW"/>
</dbReference>
<dbReference type="GO" id="GO:0003779">
    <property type="term" value="F:actin binding"/>
    <property type="evidence" value="ECO:0007669"/>
    <property type="project" value="UniProtKB-KW"/>
</dbReference>
<dbReference type="GO" id="GO:0001671">
    <property type="term" value="F:ATPase activator activity"/>
    <property type="evidence" value="ECO:0000314"/>
    <property type="project" value="BHF-UCL"/>
</dbReference>
<dbReference type="GO" id="GO:0032036">
    <property type="term" value="F:myosin heavy chain binding"/>
    <property type="evidence" value="ECO:0000318"/>
    <property type="project" value="GO_Central"/>
</dbReference>
<dbReference type="GO" id="GO:0007155">
    <property type="term" value="P:cell adhesion"/>
    <property type="evidence" value="ECO:0007669"/>
    <property type="project" value="UniProtKB-KW"/>
</dbReference>
<dbReference type="GO" id="GO:0086004">
    <property type="term" value="P:regulation of cardiac muscle cell contraction"/>
    <property type="evidence" value="ECO:0000314"/>
    <property type="project" value="BHF-UCL"/>
</dbReference>
<dbReference type="GO" id="GO:0032971">
    <property type="term" value="P:regulation of muscle filament sliding"/>
    <property type="evidence" value="ECO:0000314"/>
    <property type="project" value="BHF-UCL"/>
</dbReference>
<dbReference type="GO" id="GO:0045214">
    <property type="term" value="P:sarcomere organization"/>
    <property type="evidence" value="ECO:0000318"/>
    <property type="project" value="GO_Central"/>
</dbReference>
<dbReference type="CDD" id="cd00063">
    <property type="entry name" value="FN3"/>
    <property type="match status" value="3"/>
</dbReference>
<dbReference type="CDD" id="cd00096">
    <property type="entry name" value="Ig"/>
    <property type="match status" value="1"/>
</dbReference>
<dbReference type="FunFam" id="2.60.40.10:FF:000225">
    <property type="entry name" value="Myosin-binding protein C, cardiac-type"/>
    <property type="match status" value="1"/>
</dbReference>
<dbReference type="FunFam" id="2.60.40.10:FF:000326">
    <property type="entry name" value="Myosin-binding protein C, cardiac-type"/>
    <property type="match status" value="1"/>
</dbReference>
<dbReference type="FunFam" id="2.60.40.10:FF:000518">
    <property type="entry name" value="Myosin-binding protein C, cardiac-type"/>
    <property type="match status" value="1"/>
</dbReference>
<dbReference type="FunFam" id="2.60.40.10:FF:000576">
    <property type="entry name" value="Myosin-binding protein C, cardiac-type"/>
    <property type="match status" value="1"/>
</dbReference>
<dbReference type="FunFam" id="2.60.40.10:FF:000031">
    <property type="entry name" value="Myosin-binding protein C, slow type"/>
    <property type="match status" value="1"/>
</dbReference>
<dbReference type="FunFam" id="2.60.40.10:FF:000060">
    <property type="entry name" value="Myosin-binding protein C, slow type"/>
    <property type="match status" value="1"/>
</dbReference>
<dbReference type="FunFam" id="2.60.40.10:FF:000062">
    <property type="entry name" value="Myosin-binding protein C, slow type"/>
    <property type="match status" value="1"/>
</dbReference>
<dbReference type="FunFam" id="2.60.40.10:FF:000070">
    <property type="entry name" value="Myosin-binding protein C, slow type"/>
    <property type="match status" value="1"/>
</dbReference>
<dbReference type="FunFam" id="2.60.40.10:FF:000081">
    <property type="entry name" value="Myosin-binding protein C, slow type"/>
    <property type="match status" value="1"/>
</dbReference>
<dbReference type="FunFam" id="2.60.40.10:FF:000085">
    <property type="entry name" value="Myosin-binding protein C, slow type"/>
    <property type="match status" value="1"/>
</dbReference>
<dbReference type="FunFam" id="2.60.40.10:FF:000111">
    <property type="entry name" value="Myosin-binding protein C, slow type"/>
    <property type="match status" value="1"/>
</dbReference>
<dbReference type="Gene3D" id="2.60.40.10">
    <property type="entry name" value="Immunoglobulins"/>
    <property type="match status" value="11"/>
</dbReference>
<dbReference type="InterPro" id="IPR003961">
    <property type="entry name" value="FN3_dom"/>
</dbReference>
<dbReference type="InterPro" id="IPR036116">
    <property type="entry name" value="FN3_sf"/>
</dbReference>
<dbReference type="InterPro" id="IPR007110">
    <property type="entry name" value="Ig-like_dom"/>
</dbReference>
<dbReference type="InterPro" id="IPR036179">
    <property type="entry name" value="Ig-like_dom_sf"/>
</dbReference>
<dbReference type="InterPro" id="IPR013783">
    <property type="entry name" value="Ig-like_fold"/>
</dbReference>
<dbReference type="InterPro" id="IPR013098">
    <property type="entry name" value="Ig_I-set"/>
</dbReference>
<dbReference type="InterPro" id="IPR003599">
    <property type="entry name" value="Ig_sub"/>
</dbReference>
<dbReference type="InterPro" id="IPR003598">
    <property type="entry name" value="Ig_sub2"/>
</dbReference>
<dbReference type="InterPro" id="IPR040849">
    <property type="entry name" value="MyBP-C_THB"/>
</dbReference>
<dbReference type="InterPro" id="IPR050964">
    <property type="entry name" value="Striated_Muscle_Regulatory"/>
</dbReference>
<dbReference type="PANTHER" id="PTHR13817:SF20">
    <property type="entry name" value="MYOSIN-BINDING PROTEIN C, CARDIAC-TYPE"/>
    <property type="match status" value="1"/>
</dbReference>
<dbReference type="PANTHER" id="PTHR13817">
    <property type="entry name" value="TITIN"/>
    <property type="match status" value="1"/>
</dbReference>
<dbReference type="Pfam" id="PF00041">
    <property type="entry name" value="fn3"/>
    <property type="match status" value="3"/>
</dbReference>
<dbReference type="Pfam" id="PF07679">
    <property type="entry name" value="I-set"/>
    <property type="match status" value="8"/>
</dbReference>
<dbReference type="Pfam" id="PF18362">
    <property type="entry name" value="THB"/>
    <property type="match status" value="1"/>
</dbReference>
<dbReference type="SMART" id="SM00060">
    <property type="entry name" value="FN3"/>
    <property type="match status" value="3"/>
</dbReference>
<dbReference type="SMART" id="SM00409">
    <property type="entry name" value="IG"/>
    <property type="match status" value="8"/>
</dbReference>
<dbReference type="SMART" id="SM00408">
    <property type="entry name" value="IGc2"/>
    <property type="match status" value="5"/>
</dbReference>
<dbReference type="SUPFAM" id="SSF49265">
    <property type="entry name" value="Fibronectin type III"/>
    <property type="match status" value="2"/>
</dbReference>
<dbReference type="SUPFAM" id="SSF48726">
    <property type="entry name" value="Immunoglobulin"/>
    <property type="match status" value="8"/>
</dbReference>
<dbReference type="PROSITE" id="PS50853">
    <property type="entry name" value="FN3"/>
    <property type="match status" value="3"/>
</dbReference>
<dbReference type="PROSITE" id="PS50835">
    <property type="entry name" value="IG_LIKE"/>
    <property type="match status" value="6"/>
</dbReference>
<sequence>MPEPAKKAVSAFTKKPKTTEVAAGSTAVFEAETEKTGIKVKWQRAGTEITDSEKYAIKAEGNKHSLTISNVGKDDEVTYAVIAGTSKVKFELKVKEPEKSEPVAPAEASPAPAASELPAPPVESNQNPEVPPAETQPEEPVDPIGLFVTRPQDGEVTVGGNITFTAKVAGESLLKKPSVKWFKGKWMDLASKVGKHLQLHDNYDRNNKVYTFEMEIIEANMTFAGGYRCEVSTKDKFDSSNFNLIVNEAPVSGEMDIRAAFRRTSLAGGGRRMTSAFLSTEGLEESGELNFSALLKKRDSFLRTANRGDGKSDSQPDVDVWEILRKAPPSEYEKIAFQYGITDLRGMLKRLKRIKKEEKKSTAFLKKLDPAYQVDKGQKIKLMVEVANPDADVKWLKNGQEIQVSGSKYIFEAIGNKRILTINHCSLADDAAYECVVAEEKSFTELFVKEPPILITHPLEDQMVMVGERVEFECEVSEEGATVKWEKDGVELTREETFKYRFKKDGKKQYLIINESTKEDSGHYTVKTNGGVSVAELIVQEKKLEVYQSIADLTVKARDQAVFKCEVSDENVKGIWLKNGKEVVPDERIKISHIGRIHKLTIEDVTPGDEADYSFIPQGFAYNLSAKLQFLEVKIDFVPREEPPKIHLDCLGQSPDTIVVVAGNKLRLDVPISGDPTPTVIWQKVNKKGELVHQSNEDSLTPSENSSDLSTDSKLLFESEGRVRVEKHEDHCVFIIEGAEKEDEGVYRVIVKNPVGEDKADITVKVIDVPDPPEAPKISNIGEDYCTVQWQPPTYDGGQPVLGYILERKKKKSYRWMRLNFDLLKELTYEAKRMIEGVVYEMRIYAVNSIGMSRPSPASQPFMPIAPPSEPTHFTVEDVSDTTVALKWRPPERIGAGGLDGYIVEYCKDGSAEWTPALPGLTERTSALIKDLVTGDKLYFRVKAINLAGESGAAIIKEPVTVQEIMQRPKICVPRHLRQTLVKKVGETINIMIPFQGKPRPKISWMKDGQTLDSKDVGIRNSSTDTILFIRKAELHHSGAYEVTLQIENMTDTVAITIQIIDKPGPPQNIKLADVWGFNVALEWTPPQDDGNAQILGYTVQKADKKTMEWYTVYDHYRRTNCVVSDLIMGNEYFFRVFSENLCGLSETAATTKNPAYIQKTGTTYKPPSYKEHDFSEPPKFTHPLVNRSVIAGYNTTLSCAVRGIPKPKIFWYKNKVDLSGDAKYRMFSKQGVLTLEIRKPTPLDGGFYTCKAVNERGEAEIECRLDVRVPQ</sequence>
<organism>
    <name type="scientific">Gallus gallus</name>
    <name type="common">Chicken</name>
    <dbReference type="NCBI Taxonomy" id="9031"/>
    <lineage>
        <taxon>Eukaryota</taxon>
        <taxon>Metazoa</taxon>
        <taxon>Chordata</taxon>
        <taxon>Craniata</taxon>
        <taxon>Vertebrata</taxon>
        <taxon>Euteleostomi</taxon>
        <taxon>Archelosauria</taxon>
        <taxon>Archosauria</taxon>
        <taxon>Dinosauria</taxon>
        <taxon>Saurischia</taxon>
        <taxon>Theropoda</taxon>
        <taxon>Coelurosauria</taxon>
        <taxon>Aves</taxon>
        <taxon>Neognathae</taxon>
        <taxon>Galloanserae</taxon>
        <taxon>Galliformes</taxon>
        <taxon>Phasianidae</taxon>
        <taxon>Phasianinae</taxon>
        <taxon>Gallus</taxon>
    </lineage>
</organism>
<keyword id="KW-0009">Actin-binding</keyword>
<keyword id="KW-0025">Alternative splicing</keyword>
<keyword id="KW-0130">Cell adhesion</keyword>
<keyword id="KW-0903">Direct protein sequencing</keyword>
<keyword id="KW-0393">Immunoglobulin domain</keyword>
<keyword id="KW-0514">Muscle protein</keyword>
<keyword id="KW-0597">Phosphoprotein</keyword>
<keyword id="KW-1185">Reference proteome</keyword>
<keyword id="KW-0677">Repeat</keyword>
<keyword id="KW-0787">Thick filament</keyword>
<proteinExistence type="evidence at protein level"/>